<proteinExistence type="evidence at transcript level"/>
<protein>
    <recommendedName>
        <fullName>G-protein coupled bile acid receptor 1</fullName>
    </recommendedName>
</protein>
<keyword id="KW-1003">Cell membrane</keyword>
<keyword id="KW-1015">Disulfide bond</keyword>
<keyword id="KW-0297">G-protein coupled receptor</keyword>
<keyword id="KW-0325">Glycoprotein</keyword>
<keyword id="KW-0472">Membrane</keyword>
<keyword id="KW-0675">Receptor</keyword>
<keyword id="KW-1185">Reference proteome</keyword>
<keyword id="KW-0807">Transducer</keyword>
<keyword id="KW-0812">Transmembrane</keyword>
<keyword id="KW-1133">Transmembrane helix</keyword>
<accession>Q862A9</accession>
<accession>Q0II36</accession>
<reference key="1">
    <citation type="journal article" date="2003" name="J. Biol. Chem.">
        <title>A G protein-coupled receptor responsive to bile acids.</title>
        <authorList>
            <person name="Kawamata Y."/>
            <person name="Fujii R."/>
            <person name="Hosoya M."/>
            <person name="Harada M."/>
            <person name="Yoshida H."/>
            <person name="Miwa M."/>
            <person name="Fukusumi S."/>
            <person name="Habata Y."/>
            <person name="Itoh T."/>
            <person name="Shintani Y."/>
            <person name="Hinuma S."/>
            <person name="Fujisawa Y."/>
            <person name="Fujino M."/>
        </authorList>
    </citation>
    <scope>NUCLEOTIDE SEQUENCE [MRNA]</scope>
</reference>
<reference key="2">
    <citation type="submission" date="2006-08" db="EMBL/GenBank/DDBJ databases">
        <authorList>
            <consortium name="NIH - Mammalian Gene Collection (MGC) project"/>
        </authorList>
    </citation>
    <scope>NUCLEOTIDE SEQUENCE [LARGE SCALE MRNA]</scope>
    <source>
        <strain>Hereford</strain>
        <tissue>Hypothalamus</tissue>
    </source>
</reference>
<comment type="function">
    <text evidence="1">Receptor for bile acid. Bile acid-binding induces its internalization, activation of extracellular signal-regulated kinase and intracellular cAMP production. May be involved in the suppression of macrophage functions by bile acids. Involved in bile acid promoted GLP1R secretion (By similarity).</text>
</comment>
<comment type="subcellular location">
    <subcellularLocation>
        <location evidence="1">Cell membrane</location>
        <topology evidence="1">Multi-pass membrane protein</topology>
    </subcellularLocation>
</comment>
<comment type="similarity">
    <text evidence="3">Belongs to the G-protein coupled receptor 1 family.</text>
</comment>
<gene>
    <name type="primary">GPBAR1</name>
    <name type="synonym">TGR5</name>
</gene>
<evidence type="ECO:0000250" key="1"/>
<evidence type="ECO:0000255" key="2"/>
<evidence type="ECO:0000255" key="3">
    <source>
        <dbReference type="PROSITE-ProRule" id="PRU00521"/>
    </source>
</evidence>
<evidence type="ECO:0000256" key="4">
    <source>
        <dbReference type="SAM" id="MobiDB-lite"/>
    </source>
</evidence>
<sequence length="329" mass="35104">MTSNSTREVPSPVPAGALGLSLALASLIVAANLLLAVGIAGDRRLRSPPAGCFFLSLLLAGLLTGLALPALPVLWSQSRRGYWSCLFLYLAPNFCFLSLLANLLLVHGERYMAVLRPLRPRGSMRLALLLTWAAPLLFASLPALGWNHWAPGGNCSSQAVFPAPYLYLEIYGLLLPAVGAAALLSVRVLVTAHRQLQDIRRLERAVCRGAPSALARALTWRQARAQAGATLLFGLCWGPYVATLLLSVLAFEQRPPLGPGTLLSLISLGSASAAAVPVAMGLGDQRYTGPWRVAAQKWLRMLRGRPQSSPGPSTAYHTSSQSSVDLDLN</sequence>
<feature type="chain" id="PRO_0000069499" description="G-protein coupled bile acid receptor 1">
    <location>
        <begin position="1"/>
        <end position="329"/>
    </location>
</feature>
<feature type="topological domain" description="Extracellular" evidence="2">
    <location>
        <begin position="1"/>
        <end position="19"/>
    </location>
</feature>
<feature type="transmembrane region" description="Helical; Name=1" evidence="2">
    <location>
        <begin position="20"/>
        <end position="40"/>
    </location>
</feature>
<feature type="topological domain" description="Cytoplasmic" evidence="2">
    <location>
        <begin position="41"/>
        <end position="52"/>
    </location>
</feature>
<feature type="transmembrane region" description="Helical; Name=2" evidence="2">
    <location>
        <begin position="53"/>
        <end position="73"/>
    </location>
</feature>
<feature type="topological domain" description="Extracellular" evidence="2">
    <location>
        <begin position="74"/>
        <end position="85"/>
    </location>
</feature>
<feature type="transmembrane region" description="Helical; Name=3" evidence="2">
    <location>
        <begin position="86"/>
        <end position="106"/>
    </location>
</feature>
<feature type="topological domain" description="Cytoplasmic" evidence="2">
    <location>
        <begin position="107"/>
        <end position="125"/>
    </location>
</feature>
<feature type="transmembrane region" description="Helical; Name=4" evidence="2">
    <location>
        <begin position="126"/>
        <end position="146"/>
    </location>
</feature>
<feature type="topological domain" description="Extracellular" evidence="2">
    <location>
        <begin position="147"/>
        <end position="165"/>
    </location>
</feature>
<feature type="transmembrane region" description="Helical; Name=5" evidence="2">
    <location>
        <begin position="166"/>
        <end position="186"/>
    </location>
</feature>
<feature type="topological domain" description="Cytoplasmic" evidence="2">
    <location>
        <begin position="187"/>
        <end position="230"/>
    </location>
</feature>
<feature type="transmembrane region" description="Helical; Name=6" evidence="2">
    <location>
        <begin position="231"/>
        <end position="251"/>
    </location>
</feature>
<feature type="topological domain" description="Extracellular" evidence="2">
    <location>
        <begin position="252"/>
        <end position="261"/>
    </location>
</feature>
<feature type="transmembrane region" description="Helical; Name=7" evidence="2">
    <location>
        <begin position="262"/>
        <end position="282"/>
    </location>
</feature>
<feature type="topological domain" description="Cytoplasmic" evidence="2">
    <location>
        <begin position="283"/>
        <end position="329"/>
    </location>
</feature>
<feature type="region of interest" description="Disordered" evidence="4">
    <location>
        <begin position="304"/>
        <end position="329"/>
    </location>
</feature>
<feature type="compositionally biased region" description="Polar residues" evidence="4">
    <location>
        <begin position="306"/>
        <end position="329"/>
    </location>
</feature>
<feature type="glycosylation site" description="N-linked (GlcNAc...) asparagine" evidence="2">
    <location>
        <position position="4"/>
    </location>
</feature>
<feature type="glycosylation site" description="N-linked (GlcNAc...) asparagine" evidence="2">
    <location>
        <position position="154"/>
    </location>
</feature>
<feature type="disulfide bond" evidence="3">
    <location>
        <begin position="85"/>
        <end position="155"/>
    </location>
</feature>
<name>GPBAR_BOVIN</name>
<dbReference type="EMBL" id="AB089306">
    <property type="protein sequence ID" value="BAC55234.1"/>
    <property type="molecule type" value="mRNA"/>
</dbReference>
<dbReference type="EMBL" id="BC122824">
    <property type="protein sequence ID" value="AAI22825.1"/>
    <property type="molecule type" value="mRNA"/>
</dbReference>
<dbReference type="RefSeq" id="NP_778219.1">
    <property type="nucleotide sequence ID" value="NM_175049.3"/>
</dbReference>
<dbReference type="RefSeq" id="XP_005202862.1">
    <property type="nucleotide sequence ID" value="XM_005202805.3"/>
</dbReference>
<dbReference type="RefSeq" id="XP_005202863.1">
    <property type="nucleotide sequence ID" value="XM_005202806.3"/>
</dbReference>
<dbReference type="RefSeq" id="XP_024855013.1">
    <property type="nucleotide sequence ID" value="XM_024999245.2"/>
</dbReference>
<dbReference type="SMR" id="Q862A9"/>
<dbReference type="FunCoup" id="Q862A9">
    <property type="interactions" value="221"/>
</dbReference>
<dbReference type="STRING" id="9913.ENSBTAP00000005120"/>
<dbReference type="GlyCosmos" id="Q862A9">
    <property type="glycosylation" value="2 sites, No reported glycans"/>
</dbReference>
<dbReference type="GlyGen" id="Q862A9">
    <property type="glycosylation" value="2 sites"/>
</dbReference>
<dbReference type="PaxDb" id="9913-ENSBTAP00000005120"/>
<dbReference type="Ensembl" id="ENSBTAT00000005120.5">
    <property type="protein sequence ID" value="ENSBTAP00000005120.3"/>
    <property type="gene ID" value="ENSBTAG00000003923.5"/>
</dbReference>
<dbReference type="Ensembl" id="ENSBTAT00000090396.1">
    <property type="protein sequence ID" value="ENSBTAP00000084345.1"/>
    <property type="gene ID" value="ENSBTAG00000003923.5"/>
</dbReference>
<dbReference type="Ensembl" id="ENSBTAT00000096953.1">
    <property type="protein sequence ID" value="ENSBTAP00000090554.1"/>
    <property type="gene ID" value="ENSBTAG00000003923.5"/>
</dbReference>
<dbReference type="GeneID" id="317756"/>
<dbReference type="KEGG" id="bta:317756"/>
<dbReference type="CTD" id="151306"/>
<dbReference type="VEuPathDB" id="HostDB:ENSBTAG00000003923"/>
<dbReference type="VGNC" id="VGNC:29521">
    <property type="gene designation" value="GPBAR1"/>
</dbReference>
<dbReference type="eggNOG" id="KOG3656">
    <property type="taxonomic scope" value="Eukaryota"/>
</dbReference>
<dbReference type="GeneTree" id="ENSGT00390000010256"/>
<dbReference type="HOGENOM" id="CLU_895831_0_0_1"/>
<dbReference type="InParanoid" id="Q862A9"/>
<dbReference type="OMA" id="ACWVPYL"/>
<dbReference type="OrthoDB" id="8817982at2759"/>
<dbReference type="TreeFam" id="TF333321"/>
<dbReference type="Reactome" id="R-BTA-373076">
    <property type="pathway name" value="Class A/1 (Rhodopsin-like receptors)"/>
</dbReference>
<dbReference type="Reactome" id="R-BTA-418555">
    <property type="pathway name" value="G alpha (s) signalling events"/>
</dbReference>
<dbReference type="Proteomes" id="UP000009136">
    <property type="component" value="Chromosome 2"/>
</dbReference>
<dbReference type="Bgee" id="ENSBTAG00000003923">
    <property type="expression patterns" value="Expressed in urinary bladder and 75 other cell types or tissues"/>
</dbReference>
<dbReference type="GO" id="GO:0005737">
    <property type="term" value="C:cytoplasm"/>
    <property type="evidence" value="ECO:0007669"/>
    <property type="project" value="Ensembl"/>
</dbReference>
<dbReference type="GO" id="GO:0005886">
    <property type="term" value="C:plasma membrane"/>
    <property type="evidence" value="ECO:0000318"/>
    <property type="project" value="GO_Central"/>
</dbReference>
<dbReference type="GO" id="GO:0043235">
    <property type="term" value="C:receptor complex"/>
    <property type="evidence" value="ECO:0007669"/>
    <property type="project" value="Ensembl"/>
</dbReference>
<dbReference type="GO" id="GO:0038182">
    <property type="term" value="F:G protein-coupled bile acid receptor activity"/>
    <property type="evidence" value="ECO:0000318"/>
    <property type="project" value="GO_Central"/>
</dbReference>
<dbReference type="GO" id="GO:1903413">
    <property type="term" value="P:cellular response to bile acid"/>
    <property type="evidence" value="ECO:0007669"/>
    <property type="project" value="Ensembl"/>
</dbReference>
<dbReference type="GO" id="GO:0007186">
    <property type="term" value="P:G protein-coupled receptor signaling pathway"/>
    <property type="evidence" value="ECO:0000318"/>
    <property type="project" value="GO_Central"/>
</dbReference>
<dbReference type="GO" id="GO:2000810">
    <property type="term" value="P:regulation of bicellular tight junction assembly"/>
    <property type="evidence" value="ECO:0007669"/>
    <property type="project" value="Ensembl"/>
</dbReference>
<dbReference type="Gene3D" id="1.20.1070.10">
    <property type="entry name" value="Rhodopsin 7-helix transmembrane proteins"/>
    <property type="match status" value="1"/>
</dbReference>
<dbReference type="InterPro" id="IPR000276">
    <property type="entry name" value="GPCR_Rhodpsn"/>
</dbReference>
<dbReference type="InterPro" id="IPR017452">
    <property type="entry name" value="GPCR_Rhodpsn_7TM"/>
</dbReference>
<dbReference type="PANTHER" id="PTHR24246:SF31">
    <property type="entry name" value="G-PROTEIN COUPLED BILE ACID RECEPTOR 1"/>
    <property type="match status" value="1"/>
</dbReference>
<dbReference type="PANTHER" id="PTHR24246">
    <property type="entry name" value="OLFACTORY RECEPTOR AND ADENOSINE RECEPTOR"/>
    <property type="match status" value="1"/>
</dbReference>
<dbReference type="Pfam" id="PF00001">
    <property type="entry name" value="7tm_1"/>
    <property type="match status" value="1"/>
</dbReference>
<dbReference type="SUPFAM" id="SSF81321">
    <property type="entry name" value="Family A G protein-coupled receptor-like"/>
    <property type="match status" value="1"/>
</dbReference>
<dbReference type="PROSITE" id="PS50262">
    <property type="entry name" value="G_PROTEIN_RECEP_F1_2"/>
    <property type="match status" value="1"/>
</dbReference>
<organism>
    <name type="scientific">Bos taurus</name>
    <name type="common">Bovine</name>
    <dbReference type="NCBI Taxonomy" id="9913"/>
    <lineage>
        <taxon>Eukaryota</taxon>
        <taxon>Metazoa</taxon>
        <taxon>Chordata</taxon>
        <taxon>Craniata</taxon>
        <taxon>Vertebrata</taxon>
        <taxon>Euteleostomi</taxon>
        <taxon>Mammalia</taxon>
        <taxon>Eutheria</taxon>
        <taxon>Laurasiatheria</taxon>
        <taxon>Artiodactyla</taxon>
        <taxon>Ruminantia</taxon>
        <taxon>Pecora</taxon>
        <taxon>Bovidae</taxon>
        <taxon>Bovinae</taxon>
        <taxon>Bos</taxon>
    </lineage>
</organism>